<proteinExistence type="inferred from homology"/>
<accession>P65948</accession>
<accession>Q8YHB3</accession>
<keyword id="KW-0963">Cytoplasm</keyword>
<keyword id="KW-0671">Queuosine biosynthesis</keyword>
<keyword id="KW-0949">S-adenosyl-L-methionine</keyword>
<keyword id="KW-0808">Transferase</keyword>
<dbReference type="EC" id="2.4.99.17" evidence="1"/>
<dbReference type="EMBL" id="AE008917">
    <property type="protein sequence ID" value="AAL52070.1"/>
    <property type="molecule type" value="Genomic_DNA"/>
</dbReference>
<dbReference type="PIR" id="AC3363">
    <property type="entry name" value="AC3363"/>
</dbReference>
<dbReference type="RefSeq" id="WP_002964220.1">
    <property type="nucleotide sequence ID" value="NZ_GG703780.1"/>
</dbReference>
<dbReference type="SMR" id="P65948"/>
<dbReference type="GeneID" id="97533650"/>
<dbReference type="KEGG" id="bme:BMEI0889"/>
<dbReference type="KEGG" id="bmel:DK63_532"/>
<dbReference type="PATRIC" id="fig|224914.52.peg.555"/>
<dbReference type="eggNOG" id="COG0809">
    <property type="taxonomic scope" value="Bacteria"/>
</dbReference>
<dbReference type="UniPathway" id="UPA00392"/>
<dbReference type="Proteomes" id="UP000000419">
    <property type="component" value="Chromosome I"/>
</dbReference>
<dbReference type="GO" id="GO:0005737">
    <property type="term" value="C:cytoplasm"/>
    <property type="evidence" value="ECO:0007669"/>
    <property type="project" value="UniProtKB-SubCell"/>
</dbReference>
<dbReference type="GO" id="GO:0051075">
    <property type="term" value="F:S-adenosylmethionine:tRNA ribosyltransferase-isomerase activity"/>
    <property type="evidence" value="ECO:0007669"/>
    <property type="project" value="UniProtKB-EC"/>
</dbReference>
<dbReference type="GO" id="GO:0008616">
    <property type="term" value="P:queuosine biosynthetic process"/>
    <property type="evidence" value="ECO:0007669"/>
    <property type="project" value="UniProtKB-UniRule"/>
</dbReference>
<dbReference type="GO" id="GO:0002099">
    <property type="term" value="P:tRNA wobble guanine modification"/>
    <property type="evidence" value="ECO:0007669"/>
    <property type="project" value="TreeGrafter"/>
</dbReference>
<dbReference type="FunFam" id="3.40.1780.10:FF:000001">
    <property type="entry name" value="S-adenosylmethionine:tRNA ribosyltransferase-isomerase"/>
    <property type="match status" value="1"/>
</dbReference>
<dbReference type="Gene3D" id="2.40.10.240">
    <property type="entry name" value="QueA-like"/>
    <property type="match status" value="1"/>
</dbReference>
<dbReference type="Gene3D" id="3.40.1780.10">
    <property type="entry name" value="QueA-like"/>
    <property type="match status" value="1"/>
</dbReference>
<dbReference type="HAMAP" id="MF_00113">
    <property type="entry name" value="QueA"/>
    <property type="match status" value="1"/>
</dbReference>
<dbReference type="InterPro" id="IPR003699">
    <property type="entry name" value="QueA"/>
</dbReference>
<dbReference type="InterPro" id="IPR042118">
    <property type="entry name" value="QueA_dom1"/>
</dbReference>
<dbReference type="InterPro" id="IPR042119">
    <property type="entry name" value="QueA_dom2"/>
</dbReference>
<dbReference type="InterPro" id="IPR036100">
    <property type="entry name" value="QueA_sf"/>
</dbReference>
<dbReference type="NCBIfam" id="NF001140">
    <property type="entry name" value="PRK00147.1"/>
    <property type="match status" value="1"/>
</dbReference>
<dbReference type="NCBIfam" id="TIGR00113">
    <property type="entry name" value="queA"/>
    <property type="match status" value="1"/>
</dbReference>
<dbReference type="PANTHER" id="PTHR30307">
    <property type="entry name" value="S-ADENOSYLMETHIONINE:TRNA RIBOSYLTRANSFERASE-ISOMERASE"/>
    <property type="match status" value="1"/>
</dbReference>
<dbReference type="PANTHER" id="PTHR30307:SF0">
    <property type="entry name" value="S-ADENOSYLMETHIONINE:TRNA RIBOSYLTRANSFERASE-ISOMERASE"/>
    <property type="match status" value="1"/>
</dbReference>
<dbReference type="Pfam" id="PF02547">
    <property type="entry name" value="Queuosine_synth"/>
    <property type="match status" value="1"/>
</dbReference>
<dbReference type="SUPFAM" id="SSF111337">
    <property type="entry name" value="QueA-like"/>
    <property type="match status" value="1"/>
</dbReference>
<feature type="chain" id="PRO_0000165386" description="S-adenosylmethionine:tRNA ribosyltransferase-isomerase">
    <location>
        <begin position="1"/>
        <end position="363"/>
    </location>
</feature>
<organism>
    <name type="scientific">Brucella melitensis biotype 1 (strain ATCC 23456 / CCUG 17765 / NCTC 10094 / 16M)</name>
    <dbReference type="NCBI Taxonomy" id="224914"/>
    <lineage>
        <taxon>Bacteria</taxon>
        <taxon>Pseudomonadati</taxon>
        <taxon>Pseudomonadota</taxon>
        <taxon>Alphaproteobacteria</taxon>
        <taxon>Hyphomicrobiales</taxon>
        <taxon>Brucellaceae</taxon>
        <taxon>Brucella/Ochrobactrum group</taxon>
        <taxon>Brucella</taxon>
    </lineage>
</organism>
<sequence>MRVDLFDFDLPEERIALRPVEPRDHAKLLHVRPGEPFEDRHVYDLPDLLQPGDALVFNDTKVIPAQLEGMRERTGNISQVSATLHMRVGPDRWKAFLRPAKRVKEGDRIRFGHSGTSCFLGTLDATVAEKGDSGEALLVFDLSGAVLDEAIAAVGHIPLPPYIASKRPEDERDRKDYQTVYAREEGAVAAPTAGLHFTPDLLEKIKARGIEEHFVTLHVGAGTFLPVKADDTGDHKMHAEIGHVSQRTASALNAVHERGGRIICVGTTSLRLIESATGEDGVVRPWSGATDIFITPGYRFRAVDLLMTNFHLPRSTLFMLVSAFSGLDTMHAAYNYAIADGYRFYSYGDASLLERIDHDRHSA</sequence>
<reference key="1">
    <citation type="journal article" date="2002" name="Proc. Natl. Acad. Sci. U.S.A.">
        <title>The genome sequence of the facultative intracellular pathogen Brucella melitensis.</title>
        <authorList>
            <person name="DelVecchio V.G."/>
            <person name="Kapatral V."/>
            <person name="Redkar R.J."/>
            <person name="Patra G."/>
            <person name="Mujer C."/>
            <person name="Los T."/>
            <person name="Ivanova N."/>
            <person name="Anderson I."/>
            <person name="Bhattacharyya A."/>
            <person name="Lykidis A."/>
            <person name="Reznik G."/>
            <person name="Jablonski L."/>
            <person name="Larsen N."/>
            <person name="D'Souza M."/>
            <person name="Bernal A."/>
            <person name="Mazur M."/>
            <person name="Goltsman E."/>
            <person name="Selkov E."/>
            <person name="Elzer P.H."/>
            <person name="Hagius S."/>
            <person name="O'Callaghan D."/>
            <person name="Letesson J.-J."/>
            <person name="Haselkorn R."/>
            <person name="Kyrpides N.C."/>
            <person name="Overbeek R."/>
        </authorList>
    </citation>
    <scope>NUCLEOTIDE SEQUENCE [LARGE SCALE GENOMIC DNA]</scope>
    <source>
        <strain>ATCC 23456 / CCUG 17765 / NCTC 10094 / 16M</strain>
    </source>
</reference>
<evidence type="ECO:0000255" key="1">
    <source>
        <dbReference type="HAMAP-Rule" id="MF_00113"/>
    </source>
</evidence>
<gene>
    <name evidence="1" type="primary">queA</name>
    <name type="ordered locus">BMEI0889</name>
</gene>
<comment type="function">
    <text evidence="1">Transfers and isomerizes the ribose moiety from AdoMet to the 7-aminomethyl group of 7-deazaguanine (preQ1-tRNA) to give epoxyqueuosine (oQ-tRNA).</text>
</comment>
<comment type="catalytic activity">
    <reaction evidence="1">
        <text>7-aminomethyl-7-carbaguanosine(34) in tRNA + S-adenosyl-L-methionine = epoxyqueuosine(34) in tRNA + adenine + L-methionine + 2 H(+)</text>
        <dbReference type="Rhea" id="RHEA:32155"/>
        <dbReference type="Rhea" id="RHEA-COMP:10342"/>
        <dbReference type="Rhea" id="RHEA-COMP:18582"/>
        <dbReference type="ChEBI" id="CHEBI:15378"/>
        <dbReference type="ChEBI" id="CHEBI:16708"/>
        <dbReference type="ChEBI" id="CHEBI:57844"/>
        <dbReference type="ChEBI" id="CHEBI:59789"/>
        <dbReference type="ChEBI" id="CHEBI:82833"/>
        <dbReference type="ChEBI" id="CHEBI:194443"/>
        <dbReference type="EC" id="2.4.99.17"/>
    </reaction>
</comment>
<comment type="pathway">
    <text evidence="1">tRNA modification; tRNA-queuosine biosynthesis.</text>
</comment>
<comment type="subunit">
    <text evidence="1">Monomer.</text>
</comment>
<comment type="subcellular location">
    <subcellularLocation>
        <location evidence="1">Cytoplasm</location>
    </subcellularLocation>
</comment>
<comment type="similarity">
    <text evidence="1">Belongs to the QueA family.</text>
</comment>
<name>QUEA_BRUME</name>
<protein>
    <recommendedName>
        <fullName evidence="1">S-adenosylmethionine:tRNA ribosyltransferase-isomerase</fullName>
        <ecNumber evidence="1">2.4.99.17</ecNumber>
    </recommendedName>
    <alternativeName>
        <fullName evidence="1">Queuosine biosynthesis protein QueA</fullName>
    </alternativeName>
</protein>